<comment type="function">
    <text evidence="1">Catalyzes the phospholipid dependent N-acylation of the N-terminal cysteine of apolipoprotein, the last step in lipoprotein maturation.</text>
</comment>
<comment type="catalytic activity">
    <reaction evidence="1">
        <text>N-terminal S-1,2-diacyl-sn-glyceryl-L-cysteinyl-[lipoprotein] + a glycerophospholipid = N-acyl-S-1,2-diacyl-sn-glyceryl-L-cysteinyl-[lipoprotein] + a 2-acyl-sn-glycero-3-phospholipid + H(+)</text>
        <dbReference type="Rhea" id="RHEA:48228"/>
        <dbReference type="Rhea" id="RHEA-COMP:14681"/>
        <dbReference type="Rhea" id="RHEA-COMP:14684"/>
        <dbReference type="ChEBI" id="CHEBI:15378"/>
        <dbReference type="ChEBI" id="CHEBI:136912"/>
        <dbReference type="ChEBI" id="CHEBI:140656"/>
        <dbReference type="ChEBI" id="CHEBI:140657"/>
        <dbReference type="ChEBI" id="CHEBI:140660"/>
        <dbReference type="EC" id="2.3.1.269"/>
    </reaction>
</comment>
<comment type="pathway">
    <text evidence="1">Protein modification; lipoprotein biosynthesis (N-acyl transfer).</text>
</comment>
<comment type="subcellular location">
    <subcellularLocation>
        <location evidence="1">Cell inner membrane</location>
        <topology evidence="1">Multi-pass membrane protein</topology>
    </subcellularLocation>
</comment>
<comment type="similarity">
    <text evidence="1">Belongs to the CN hydrolase family. Apolipoprotein N-acyltransferase subfamily.</text>
</comment>
<accession>Q8Z8G7</accession>
<proteinExistence type="inferred from homology"/>
<name>LNT_SALTI</name>
<keyword id="KW-0012">Acyltransferase</keyword>
<keyword id="KW-0997">Cell inner membrane</keyword>
<keyword id="KW-1003">Cell membrane</keyword>
<keyword id="KW-0472">Membrane</keyword>
<keyword id="KW-0808">Transferase</keyword>
<keyword id="KW-0812">Transmembrane</keyword>
<keyword id="KW-1133">Transmembrane helix</keyword>
<protein>
    <recommendedName>
        <fullName evidence="1">Apolipoprotein N-acyltransferase</fullName>
        <shortName evidence="1">ALP N-acyltransferase</shortName>
        <ecNumber evidence="1">2.3.1.269</ecNumber>
    </recommendedName>
</protein>
<dbReference type="EC" id="2.3.1.269" evidence="1"/>
<dbReference type="EMBL" id="AL513382">
    <property type="protein sequence ID" value="CAD05137.1"/>
    <property type="molecule type" value="Genomic_DNA"/>
</dbReference>
<dbReference type="EMBL" id="AE014613">
    <property type="protein sequence ID" value="AAO69811.1"/>
    <property type="molecule type" value="Genomic_DNA"/>
</dbReference>
<dbReference type="RefSeq" id="NP_455235.1">
    <property type="nucleotide sequence ID" value="NC_003198.1"/>
</dbReference>
<dbReference type="RefSeq" id="WP_000853074.1">
    <property type="nucleotide sequence ID" value="NZ_WSUR01000015.1"/>
</dbReference>
<dbReference type="SMR" id="Q8Z8G7"/>
<dbReference type="STRING" id="220341.gene:17584718"/>
<dbReference type="KEGG" id="stt:t2207"/>
<dbReference type="KEGG" id="sty:STY0711"/>
<dbReference type="PATRIC" id="fig|220341.7.peg.716"/>
<dbReference type="eggNOG" id="COG0815">
    <property type="taxonomic scope" value="Bacteria"/>
</dbReference>
<dbReference type="HOGENOM" id="CLU_019563_3_0_6"/>
<dbReference type="OMA" id="GICYESA"/>
<dbReference type="OrthoDB" id="9804277at2"/>
<dbReference type="UniPathway" id="UPA00666"/>
<dbReference type="Proteomes" id="UP000000541">
    <property type="component" value="Chromosome"/>
</dbReference>
<dbReference type="Proteomes" id="UP000002670">
    <property type="component" value="Chromosome"/>
</dbReference>
<dbReference type="GO" id="GO:0005886">
    <property type="term" value="C:plasma membrane"/>
    <property type="evidence" value="ECO:0007669"/>
    <property type="project" value="UniProtKB-SubCell"/>
</dbReference>
<dbReference type="GO" id="GO:0016410">
    <property type="term" value="F:N-acyltransferase activity"/>
    <property type="evidence" value="ECO:0007669"/>
    <property type="project" value="UniProtKB-UniRule"/>
</dbReference>
<dbReference type="GO" id="GO:0042158">
    <property type="term" value="P:lipoprotein biosynthetic process"/>
    <property type="evidence" value="ECO:0007669"/>
    <property type="project" value="UniProtKB-UniRule"/>
</dbReference>
<dbReference type="CDD" id="cd07571">
    <property type="entry name" value="ALP_N-acyl_transferase"/>
    <property type="match status" value="1"/>
</dbReference>
<dbReference type="FunFam" id="3.60.110.10:FF:000015">
    <property type="entry name" value="Apolipoprotein N-acyltransferase"/>
    <property type="match status" value="1"/>
</dbReference>
<dbReference type="Gene3D" id="3.60.110.10">
    <property type="entry name" value="Carbon-nitrogen hydrolase"/>
    <property type="match status" value="1"/>
</dbReference>
<dbReference type="HAMAP" id="MF_01148">
    <property type="entry name" value="Lnt"/>
    <property type="match status" value="1"/>
</dbReference>
<dbReference type="InterPro" id="IPR004563">
    <property type="entry name" value="Apolipo_AcylTrfase"/>
</dbReference>
<dbReference type="InterPro" id="IPR003010">
    <property type="entry name" value="C-N_Hydrolase"/>
</dbReference>
<dbReference type="InterPro" id="IPR036526">
    <property type="entry name" value="C-N_Hydrolase_sf"/>
</dbReference>
<dbReference type="InterPro" id="IPR045378">
    <property type="entry name" value="LNT_N"/>
</dbReference>
<dbReference type="NCBIfam" id="TIGR00546">
    <property type="entry name" value="lnt"/>
    <property type="match status" value="1"/>
</dbReference>
<dbReference type="PANTHER" id="PTHR38686">
    <property type="entry name" value="APOLIPOPROTEIN N-ACYLTRANSFERASE"/>
    <property type="match status" value="1"/>
</dbReference>
<dbReference type="PANTHER" id="PTHR38686:SF1">
    <property type="entry name" value="APOLIPOPROTEIN N-ACYLTRANSFERASE"/>
    <property type="match status" value="1"/>
</dbReference>
<dbReference type="Pfam" id="PF00795">
    <property type="entry name" value="CN_hydrolase"/>
    <property type="match status" value="1"/>
</dbReference>
<dbReference type="Pfam" id="PF20154">
    <property type="entry name" value="LNT_N"/>
    <property type="match status" value="1"/>
</dbReference>
<dbReference type="SUPFAM" id="SSF56317">
    <property type="entry name" value="Carbon-nitrogen hydrolase"/>
    <property type="match status" value="1"/>
</dbReference>
<dbReference type="PROSITE" id="PS50263">
    <property type="entry name" value="CN_HYDROLASE"/>
    <property type="match status" value="1"/>
</dbReference>
<organism>
    <name type="scientific">Salmonella typhi</name>
    <dbReference type="NCBI Taxonomy" id="90370"/>
    <lineage>
        <taxon>Bacteria</taxon>
        <taxon>Pseudomonadati</taxon>
        <taxon>Pseudomonadota</taxon>
        <taxon>Gammaproteobacteria</taxon>
        <taxon>Enterobacterales</taxon>
        <taxon>Enterobacteriaceae</taxon>
        <taxon>Salmonella</taxon>
    </lineage>
</organism>
<feature type="chain" id="PRO_0000178095" description="Apolipoprotein N-acyltransferase">
    <location>
        <begin position="1"/>
        <end position="512"/>
    </location>
</feature>
<feature type="transmembrane region" description="Helical" evidence="1">
    <location>
        <begin position="14"/>
        <end position="34"/>
    </location>
</feature>
<feature type="transmembrane region" description="Helical" evidence="1">
    <location>
        <begin position="57"/>
        <end position="77"/>
    </location>
</feature>
<feature type="transmembrane region" description="Helical" evidence="1">
    <location>
        <begin position="91"/>
        <end position="111"/>
    </location>
</feature>
<feature type="transmembrane region" description="Helical" evidence="1">
    <location>
        <begin position="124"/>
        <end position="144"/>
    </location>
</feature>
<feature type="transmembrane region" description="Helical" evidence="1">
    <location>
        <begin position="166"/>
        <end position="186"/>
    </location>
</feature>
<feature type="transmembrane region" description="Helical" evidence="1">
    <location>
        <begin position="194"/>
        <end position="214"/>
    </location>
</feature>
<feature type="transmembrane region" description="Helical" evidence="1">
    <location>
        <begin position="487"/>
        <end position="507"/>
    </location>
</feature>
<feature type="domain" description="CN hydrolase" evidence="1">
    <location>
        <begin position="227"/>
        <end position="476"/>
    </location>
</feature>
<feature type="active site" description="Proton acceptor" evidence="1">
    <location>
        <position position="267"/>
    </location>
</feature>
<feature type="active site" evidence="1">
    <location>
        <position position="335"/>
    </location>
</feature>
<feature type="active site" description="Nucleophile" evidence="1">
    <location>
        <position position="387"/>
    </location>
</feature>
<evidence type="ECO:0000255" key="1">
    <source>
        <dbReference type="HAMAP-Rule" id="MF_01148"/>
    </source>
</evidence>
<sequence>MAFASLIERQRIRLLLALLFGACGTLAFSPYDVWPAAIVSLIGLQALTFNRRPLQSAAIGYCWGLGLFGSGINWVYVSIAQFGGMPGPVNVFLVVLLAAYLSLYTGLFAGILSRLWPKTNWLRVAIAAPAIWQITEFLRGWVLTGFPWLQFGYSQVDGPLKGLAPVMGVEAINFLLMMVSGLLALALATRNWRPLAVAVILFALPFPLRYIQWFTLEPTKATQVSLVQGDIPQSLKWDENQLLNTLNIYLNETRPELGKSQIIIWPESAIPDLEINQQPFLRSLDEMLREKNSTLITGIVDARLNKQNRYDTYNTIITLGKDNPYSYDSPNRYNKNHLVPFGEFVPLESILRPLAPFFDLPMSSFSRGPYIQPQLHAHDYKLTAAICYEIILGEQVRDNFRPDTDYLLTISNDAWFGKSIGPWQHFQMARMRSLELARPLLRSTNNGITAVIGPQGEIQAMIPQFTRQVLTTKVTPTTGLTPYARTGDWTVWLITVLFGFGALVMSLRQRRK</sequence>
<gene>
    <name evidence="1" type="primary">lnt</name>
    <name type="synonym">cutE</name>
    <name type="ordered locus">STY0711</name>
    <name type="ordered locus">t2207</name>
</gene>
<reference key="1">
    <citation type="journal article" date="2001" name="Nature">
        <title>Complete genome sequence of a multiple drug resistant Salmonella enterica serovar Typhi CT18.</title>
        <authorList>
            <person name="Parkhill J."/>
            <person name="Dougan G."/>
            <person name="James K.D."/>
            <person name="Thomson N.R."/>
            <person name="Pickard D."/>
            <person name="Wain J."/>
            <person name="Churcher C.M."/>
            <person name="Mungall K.L."/>
            <person name="Bentley S.D."/>
            <person name="Holden M.T.G."/>
            <person name="Sebaihia M."/>
            <person name="Baker S."/>
            <person name="Basham D."/>
            <person name="Brooks K."/>
            <person name="Chillingworth T."/>
            <person name="Connerton P."/>
            <person name="Cronin A."/>
            <person name="Davis P."/>
            <person name="Davies R.M."/>
            <person name="Dowd L."/>
            <person name="White N."/>
            <person name="Farrar J."/>
            <person name="Feltwell T."/>
            <person name="Hamlin N."/>
            <person name="Haque A."/>
            <person name="Hien T.T."/>
            <person name="Holroyd S."/>
            <person name="Jagels K."/>
            <person name="Krogh A."/>
            <person name="Larsen T.S."/>
            <person name="Leather S."/>
            <person name="Moule S."/>
            <person name="O'Gaora P."/>
            <person name="Parry C."/>
            <person name="Quail M.A."/>
            <person name="Rutherford K.M."/>
            <person name="Simmonds M."/>
            <person name="Skelton J."/>
            <person name="Stevens K."/>
            <person name="Whitehead S."/>
            <person name="Barrell B.G."/>
        </authorList>
    </citation>
    <scope>NUCLEOTIDE SEQUENCE [LARGE SCALE GENOMIC DNA]</scope>
    <source>
        <strain>CT18</strain>
    </source>
</reference>
<reference key="2">
    <citation type="journal article" date="2003" name="J. Bacteriol.">
        <title>Comparative genomics of Salmonella enterica serovar Typhi strains Ty2 and CT18.</title>
        <authorList>
            <person name="Deng W."/>
            <person name="Liou S.-R."/>
            <person name="Plunkett G. III"/>
            <person name="Mayhew G.F."/>
            <person name="Rose D.J."/>
            <person name="Burland V."/>
            <person name="Kodoyianni V."/>
            <person name="Schwartz D.C."/>
            <person name="Blattner F.R."/>
        </authorList>
    </citation>
    <scope>NUCLEOTIDE SEQUENCE [LARGE SCALE GENOMIC DNA]</scope>
    <source>
        <strain>ATCC 700931 / Ty2</strain>
    </source>
</reference>